<protein>
    <recommendedName>
        <fullName>Cysteine proteinase inhibitor 7</fullName>
        <shortName>AtCYS-7</shortName>
    </recommendedName>
</protein>
<dbReference type="EMBL" id="AB005245">
    <property type="protein sequence ID" value="BAB11533.1"/>
    <property type="molecule type" value="Genomic_DNA"/>
</dbReference>
<dbReference type="EMBL" id="CP002688">
    <property type="protein sequence ID" value="AED90829.1"/>
    <property type="molecule type" value="Genomic_DNA"/>
</dbReference>
<dbReference type="EMBL" id="AF370168">
    <property type="protein sequence ID" value="AAK43983.1"/>
    <property type="molecule type" value="mRNA"/>
</dbReference>
<dbReference type="EMBL" id="AY059130">
    <property type="protein sequence ID" value="AAL15236.1"/>
    <property type="molecule type" value="mRNA"/>
</dbReference>
<dbReference type="EMBL" id="AY086750">
    <property type="protein sequence ID" value="AAM63801.1"/>
    <property type="status" value="ALT_INIT"/>
    <property type="molecule type" value="mRNA"/>
</dbReference>
<dbReference type="RefSeq" id="NP_196130.1">
    <property type="nucleotide sequence ID" value="NM_120593.3"/>
</dbReference>
<dbReference type="SMR" id="Q8LC76"/>
<dbReference type="FunCoup" id="Q8LC76">
    <property type="interactions" value="13"/>
</dbReference>
<dbReference type="STRING" id="3702.Q8LC76"/>
<dbReference type="MEROPS" id="I25.958"/>
<dbReference type="PaxDb" id="3702-AT5G05110.1"/>
<dbReference type="ProteomicsDB" id="220463"/>
<dbReference type="EnsemblPlants" id="AT5G05110.1">
    <property type="protein sequence ID" value="AT5G05110.1"/>
    <property type="gene ID" value="AT5G05110"/>
</dbReference>
<dbReference type="GeneID" id="830393"/>
<dbReference type="Gramene" id="AT5G05110.1">
    <property type="protein sequence ID" value="AT5G05110.1"/>
    <property type="gene ID" value="AT5G05110"/>
</dbReference>
<dbReference type="KEGG" id="ath:AT5G05110"/>
<dbReference type="Araport" id="AT5G05110"/>
<dbReference type="TAIR" id="AT5G05110"/>
<dbReference type="eggNOG" id="ENOG502SJ6Y">
    <property type="taxonomic scope" value="Eukaryota"/>
</dbReference>
<dbReference type="HOGENOM" id="CLU_072701_1_0_1"/>
<dbReference type="InParanoid" id="Q8LC76"/>
<dbReference type="OMA" id="WHAVRIQ"/>
<dbReference type="PhylomeDB" id="Q8LC76"/>
<dbReference type="PRO" id="PR:Q8LC76"/>
<dbReference type="Proteomes" id="UP000006548">
    <property type="component" value="Chromosome 5"/>
</dbReference>
<dbReference type="ExpressionAtlas" id="Q8LC76">
    <property type="expression patterns" value="baseline and differential"/>
</dbReference>
<dbReference type="GO" id="GO:0005576">
    <property type="term" value="C:extracellular region"/>
    <property type="evidence" value="ECO:0007669"/>
    <property type="project" value="UniProtKB-SubCell"/>
</dbReference>
<dbReference type="GO" id="GO:0004869">
    <property type="term" value="F:cysteine-type endopeptidase inhibitor activity"/>
    <property type="evidence" value="ECO:0007669"/>
    <property type="project" value="UniProtKB-KW"/>
</dbReference>
<dbReference type="GO" id="GO:0006952">
    <property type="term" value="P:defense response"/>
    <property type="evidence" value="ECO:0007669"/>
    <property type="project" value="UniProtKB-KW"/>
</dbReference>
<dbReference type="CDD" id="cd00042">
    <property type="entry name" value="CY"/>
    <property type="match status" value="2"/>
</dbReference>
<dbReference type="Gene3D" id="3.10.450.10">
    <property type="match status" value="2"/>
</dbReference>
<dbReference type="InterPro" id="IPR027214">
    <property type="entry name" value="Cystatin"/>
</dbReference>
<dbReference type="InterPro" id="IPR000010">
    <property type="entry name" value="Cystatin_dom"/>
</dbReference>
<dbReference type="InterPro" id="IPR046350">
    <property type="entry name" value="Cystatin_sf"/>
</dbReference>
<dbReference type="InterPro" id="IPR018073">
    <property type="entry name" value="Prot_inh_cystat_CS"/>
</dbReference>
<dbReference type="PANTHER" id="PTHR11413">
    <property type="entry name" value="CYSTATIN FAMILY MEMBER"/>
    <property type="match status" value="1"/>
</dbReference>
<dbReference type="PANTHER" id="PTHR11413:SF118">
    <property type="entry name" value="CYSTEINE PROTEINASE INHIBITOR 7"/>
    <property type="match status" value="1"/>
</dbReference>
<dbReference type="Pfam" id="PF00031">
    <property type="entry name" value="Cystatin"/>
    <property type="match status" value="1"/>
</dbReference>
<dbReference type="Pfam" id="PF16845">
    <property type="entry name" value="SQAPI"/>
    <property type="match status" value="1"/>
</dbReference>
<dbReference type="SMART" id="SM00043">
    <property type="entry name" value="CY"/>
    <property type="match status" value="1"/>
</dbReference>
<dbReference type="SUPFAM" id="SSF54403">
    <property type="entry name" value="Cystatin/monellin"/>
    <property type="match status" value="2"/>
</dbReference>
<dbReference type="PROSITE" id="PS00287">
    <property type="entry name" value="CYSTATIN"/>
    <property type="match status" value="1"/>
</dbReference>
<proteinExistence type="evidence at transcript level"/>
<keyword id="KW-0597">Phosphoprotein</keyword>
<keyword id="KW-0611">Plant defense</keyword>
<keyword id="KW-0646">Protease inhibitor</keyword>
<keyword id="KW-1185">Reference proteome</keyword>
<keyword id="KW-0677">Repeat</keyword>
<keyword id="KW-0964">Secreted</keyword>
<keyword id="KW-0732">Signal</keyword>
<keyword id="KW-0789">Thiol protease inhibitor</keyword>
<sequence length="232" mass="26582">MDMRRASMCMMLICVSLVLLSGFGQFVICSEEKGTYNDNVVKMKLGGFSDSKNDWNGGKEIDDIALFAVQEHNRRENAVLELARVLKATEQVVAGKLYRLTLEVIEAGEKKIYEAKVWVKPWMNFKQLQEFKNIIPSFTISDLGFKPDGNGFDWRSVSTNNPEVQEAAKHAMKSLQQKSNSLFPYKLIDIILARAKVVEERVKFELLLKLERGNKLEKFMVEVMKDQTGKYE</sequence>
<accession>Q8LC76</accession>
<accession>Q9FF63</accession>
<evidence type="ECO:0000250" key="1"/>
<evidence type="ECO:0000250" key="2">
    <source>
        <dbReference type="UniProtKB" id="Q8H0X6"/>
    </source>
</evidence>
<evidence type="ECO:0000255" key="3"/>
<evidence type="ECO:0000305" key="4"/>
<organism>
    <name type="scientific">Arabidopsis thaliana</name>
    <name type="common">Mouse-ear cress</name>
    <dbReference type="NCBI Taxonomy" id="3702"/>
    <lineage>
        <taxon>Eukaryota</taxon>
        <taxon>Viridiplantae</taxon>
        <taxon>Streptophyta</taxon>
        <taxon>Embryophyta</taxon>
        <taxon>Tracheophyta</taxon>
        <taxon>Spermatophyta</taxon>
        <taxon>Magnoliopsida</taxon>
        <taxon>eudicotyledons</taxon>
        <taxon>Gunneridae</taxon>
        <taxon>Pentapetalae</taxon>
        <taxon>rosids</taxon>
        <taxon>malvids</taxon>
        <taxon>Brassicales</taxon>
        <taxon>Brassicaceae</taxon>
        <taxon>Camelineae</taxon>
        <taxon>Arabidopsis</taxon>
    </lineage>
</organism>
<reference key="1">
    <citation type="journal article" date="1997" name="DNA Res.">
        <title>Structural analysis of Arabidopsis thaliana chromosome 5. I. Sequence features of the 1.6 Mb regions covered by twenty physically assigned P1 clones.</title>
        <authorList>
            <person name="Sato S."/>
            <person name="Kotani H."/>
            <person name="Nakamura Y."/>
            <person name="Kaneko T."/>
            <person name="Asamizu E."/>
            <person name="Fukami M."/>
            <person name="Miyajima N."/>
            <person name="Tabata S."/>
        </authorList>
    </citation>
    <scope>NUCLEOTIDE SEQUENCE [LARGE SCALE GENOMIC DNA]</scope>
    <source>
        <strain>cv. Columbia</strain>
    </source>
</reference>
<reference key="2">
    <citation type="journal article" date="2017" name="Plant J.">
        <title>Araport11: a complete reannotation of the Arabidopsis thaliana reference genome.</title>
        <authorList>
            <person name="Cheng C.Y."/>
            <person name="Krishnakumar V."/>
            <person name="Chan A.P."/>
            <person name="Thibaud-Nissen F."/>
            <person name="Schobel S."/>
            <person name="Town C.D."/>
        </authorList>
    </citation>
    <scope>GENOME REANNOTATION</scope>
    <source>
        <strain>cv. Columbia</strain>
    </source>
</reference>
<reference key="3">
    <citation type="journal article" date="2003" name="Science">
        <title>Empirical analysis of transcriptional activity in the Arabidopsis genome.</title>
        <authorList>
            <person name="Yamada K."/>
            <person name="Lim J."/>
            <person name="Dale J.M."/>
            <person name="Chen H."/>
            <person name="Shinn P."/>
            <person name="Palm C.J."/>
            <person name="Southwick A.M."/>
            <person name="Wu H.C."/>
            <person name="Kim C.J."/>
            <person name="Nguyen M."/>
            <person name="Pham P.K."/>
            <person name="Cheuk R.F."/>
            <person name="Karlin-Newmann G."/>
            <person name="Liu S.X."/>
            <person name="Lam B."/>
            <person name="Sakano H."/>
            <person name="Wu T."/>
            <person name="Yu G."/>
            <person name="Miranda M."/>
            <person name="Quach H.L."/>
            <person name="Tripp M."/>
            <person name="Chang C.H."/>
            <person name="Lee J.M."/>
            <person name="Toriumi M.J."/>
            <person name="Chan M.M."/>
            <person name="Tang C.C."/>
            <person name="Onodera C.S."/>
            <person name="Deng J.M."/>
            <person name="Akiyama K."/>
            <person name="Ansari Y."/>
            <person name="Arakawa T."/>
            <person name="Banh J."/>
            <person name="Banno F."/>
            <person name="Bowser L."/>
            <person name="Brooks S.Y."/>
            <person name="Carninci P."/>
            <person name="Chao Q."/>
            <person name="Choy N."/>
            <person name="Enju A."/>
            <person name="Goldsmith A.D."/>
            <person name="Gurjal M."/>
            <person name="Hansen N.F."/>
            <person name="Hayashizaki Y."/>
            <person name="Johnson-Hopson C."/>
            <person name="Hsuan V.W."/>
            <person name="Iida K."/>
            <person name="Karnes M."/>
            <person name="Khan S."/>
            <person name="Koesema E."/>
            <person name="Ishida J."/>
            <person name="Jiang P.X."/>
            <person name="Jones T."/>
            <person name="Kawai J."/>
            <person name="Kamiya A."/>
            <person name="Meyers C."/>
            <person name="Nakajima M."/>
            <person name="Narusaka M."/>
            <person name="Seki M."/>
            <person name="Sakurai T."/>
            <person name="Satou M."/>
            <person name="Tamse R."/>
            <person name="Vaysberg M."/>
            <person name="Wallender E.K."/>
            <person name="Wong C."/>
            <person name="Yamamura Y."/>
            <person name="Yuan S."/>
            <person name="Shinozaki K."/>
            <person name="Davis R.W."/>
            <person name="Theologis A."/>
            <person name="Ecker J.R."/>
        </authorList>
    </citation>
    <scope>NUCLEOTIDE SEQUENCE [LARGE SCALE MRNA]</scope>
    <source>
        <strain>cv. Columbia</strain>
    </source>
</reference>
<reference key="4">
    <citation type="submission" date="2002-03" db="EMBL/GenBank/DDBJ databases">
        <title>Full-length cDNA from Arabidopsis thaliana.</title>
        <authorList>
            <person name="Brover V.V."/>
            <person name="Troukhan M.E."/>
            <person name="Alexandrov N.A."/>
            <person name="Lu Y.-P."/>
            <person name="Flavell R.B."/>
            <person name="Feldmann K.A."/>
        </authorList>
    </citation>
    <scope>NUCLEOTIDE SEQUENCE [LARGE SCALE MRNA]</scope>
</reference>
<reference key="5">
    <citation type="journal article" date="2005" name="Mol. Genet. Genomics">
        <title>Comparative phylogenetic analysis of cystatin gene families from arabidopsis, rice and barley.</title>
        <authorList>
            <person name="Martinez M."/>
            <person name="Abraham Z."/>
            <person name="Carbonero P."/>
            <person name="Diaz I."/>
        </authorList>
    </citation>
    <scope>GENE FAMILY</scope>
</reference>
<name>CYT7_ARATH</name>
<gene>
    <name type="primary">CYS7</name>
    <name type="ordered locus">At5g05110</name>
    <name type="ORF">MUG13.3</name>
</gene>
<feature type="signal peptide" evidence="3">
    <location>
        <begin position="1"/>
        <end position="29"/>
    </location>
</feature>
<feature type="chain" id="PRO_0000277499" description="Cysteine proteinase inhibitor 7">
    <location>
        <begin position="30"/>
        <end position="232"/>
    </location>
</feature>
<feature type="domain" description="Cystatin 1">
    <location>
        <begin position="46"/>
        <end position="135"/>
    </location>
</feature>
<feature type="domain" description="Cystatin 2">
    <location>
        <begin position="152"/>
        <end position="214"/>
    </location>
</feature>
<feature type="short sequence motif" description="Secondary area of contact" evidence="1">
    <location>
        <begin position="91"/>
        <end position="95"/>
    </location>
</feature>
<feature type="site" description="Reactive site" evidence="1">
    <location>
        <position position="46"/>
    </location>
</feature>
<feature type="modified residue" description="Phosphoserine" evidence="2">
    <location>
        <position position="181"/>
    </location>
</feature>
<comment type="function">
    <text evidence="1">Specific inhibitor of cysteine proteinases. Probably involved in the regulation of endogenous processes and in defense against pests and pathogens (By similarity).</text>
</comment>
<comment type="subcellular location">
    <subcellularLocation>
        <location evidence="4">Secreted</location>
    </subcellularLocation>
</comment>
<comment type="similarity">
    <text evidence="4">Belongs to the cystatin family. Phytocystatin subfamily.</text>
</comment>
<comment type="sequence caution" evidence="4">
    <conflict type="erroneous initiation">
        <sequence resource="EMBL-CDS" id="AAM63801"/>
    </conflict>
</comment>